<evidence type="ECO:0000255" key="1">
    <source>
        <dbReference type="HAMAP-Rule" id="MF_00318"/>
    </source>
</evidence>
<accession>B5EPM7</accession>
<organism>
    <name type="scientific">Acidithiobacillus ferrooxidans (strain ATCC 53993 / BNL-5-31)</name>
    <name type="common">Leptospirillum ferrooxidans (ATCC 53993)</name>
    <dbReference type="NCBI Taxonomy" id="380394"/>
    <lineage>
        <taxon>Bacteria</taxon>
        <taxon>Pseudomonadati</taxon>
        <taxon>Pseudomonadota</taxon>
        <taxon>Acidithiobacillia</taxon>
        <taxon>Acidithiobacillales</taxon>
        <taxon>Acidithiobacillaceae</taxon>
        <taxon>Acidithiobacillus</taxon>
    </lineage>
</organism>
<proteinExistence type="inferred from homology"/>
<dbReference type="EC" id="4.2.1.11" evidence="1"/>
<dbReference type="EMBL" id="CP001132">
    <property type="protein sequence ID" value="ACH83221.1"/>
    <property type="molecule type" value="Genomic_DNA"/>
</dbReference>
<dbReference type="RefSeq" id="WP_012536392.1">
    <property type="nucleotide sequence ID" value="NC_011206.1"/>
</dbReference>
<dbReference type="SMR" id="B5EPM7"/>
<dbReference type="GeneID" id="65280176"/>
<dbReference type="KEGG" id="afe:Lferr_0975"/>
<dbReference type="eggNOG" id="COG0148">
    <property type="taxonomic scope" value="Bacteria"/>
</dbReference>
<dbReference type="HOGENOM" id="CLU_031223_2_1_6"/>
<dbReference type="UniPathway" id="UPA00109">
    <property type="reaction ID" value="UER00187"/>
</dbReference>
<dbReference type="GO" id="GO:0009986">
    <property type="term" value="C:cell surface"/>
    <property type="evidence" value="ECO:0007669"/>
    <property type="project" value="UniProtKB-SubCell"/>
</dbReference>
<dbReference type="GO" id="GO:0005576">
    <property type="term" value="C:extracellular region"/>
    <property type="evidence" value="ECO:0007669"/>
    <property type="project" value="UniProtKB-SubCell"/>
</dbReference>
<dbReference type="GO" id="GO:0000015">
    <property type="term" value="C:phosphopyruvate hydratase complex"/>
    <property type="evidence" value="ECO:0007669"/>
    <property type="project" value="InterPro"/>
</dbReference>
<dbReference type="GO" id="GO:0000287">
    <property type="term" value="F:magnesium ion binding"/>
    <property type="evidence" value="ECO:0007669"/>
    <property type="project" value="UniProtKB-UniRule"/>
</dbReference>
<dbReference type="GO" id="GO:0004634">
    <property type="term" value="F:phosphopyruvate hydratase activity"/>
    <property type="evidence" value="ECO:0007669"/>
    <property type="project" value="UniProtKB-UniRule"/>
</dbReference>
<dbReference type="GO" id="GO:0006096">
    <property type="term" value="P:glycolytic process"/>
    <property type="evidence" value="ECO:0007669"/>
    <property type="project" value="UniProtKB-UniRule"/>
</dbReference>
<dbReference type="CDD" id="cd03313">
    <property type="entry name" value="enolase"/>
    <property type="match status" value="1"/>
</dbReference>
<dbReference type="FunFam" id="3.20.20.120:FF:000001">
    <property type="entry name" value="Enolase"/>
    <property type="match status" value="1"/>
</dbReference>
<dbReference type="FunFam" id="3.30.390.10:FF:000001">
    <property type="entry name" value="Enolase"/>
    <property type="match status" value="1"/>
</dbReference>
<dbReference type="Gene3D" id="3.20.20.120">
    <property type="entry name" value="Enolase-like C-terminal domain"/>
    <property type="match status" value="1"/>
</dbReference>
<dbReference type="Gene3D" id="3.30.390.10">
    <property type="entry name" value="Enolase-like, N-terminal domain"/>
    <property type="match status" value="1"/>
</dbReference>
<dbReference type="HAMAP" id="MF_00318">
    <property type="entry name" value="Enolase"/>
    <property type="match status" value="1"/>
</dbReference>
<dbReference type="InterPro" id="IPR000941">
    <property type="entry name" value="Enolase"/>
</dbReference>
<dbReference type="InterPro" id="IPR036849">
    <property type="entry name" value="Enolase-like_C_sf"/>
</dbReference>
<dbReference type="InterPro" id="IPR029017">
    <property type="entry name" value="Enolase-like_N"/>
</dbReference>
<dbReference type="InterPro" id="IPR020810">
    <property type="entry name" value="Enolase_C"/>
</dbReference>
<dbReference type="InterPro" id="IPR020809">
    <property type="entry name" value="Enolase_CS"/>
</dbReference>
<dbReference type="InterPro" id="IPR020811">
    <property type="entry name" value="Enolase_N"/>
</dbReference>
<dbReference type="NCBIfam" id="TIGR01060">
    <property type="entry name" value="eno"/>
    <property type="match status" value="1"/>
</dbReference>
<dbReference type="PANTHER" id="PTHR11902">
    <property type="entry name" value="ENOLASE"/>
    <property type="match status" value="1"/>
</dbReference>
<dbReference type="PANTHER" id="PTHR11902:SF1">
    <property type="entry name" value="ENOLASE"/>
    <property type="match status" value="1"/>
</dbReference>
<dbReference type="Pfam" id="PF00113">
    <property type="entry name" value="Enolase_C"/>
    <property type="match status" value="1"/>
</dbReference>
<dbReference type="Pfam" id="PF03952">
    <property type="entry name" value="Enolase_N"/>
    <property type="match status" value="1"/>
</dbReference>
<dbReference type="PIRSF" id="PIRSF001400">
    <property type="entry name" value="Enolase"/>
    <property type="match status" value="1"/>
</dbReference>
<dbReference type="PRINTS" id="PR00148">
    <property type="entry name" value="ENOLASE"/>
</dbReference>
<dbReference type="SFLD" id="SFLDF00002">
    <property type="entry name" value="enolase"/>
    <property type="match status" value="1"/>
</dbReference>
<dbReference type="SFLD" id="SFLDG00178">
    <property type="entry name" value="enolase"/>
    <property type="match status" value="1"/>
</dbReference>
<dbReference type="SMART" id="SM01192">
    <property type="entry name" value="Enolase_C"/>
    <property type="match status" value="1"/>
</dbReference>
<dbReference type="SMART" id="SM01193">
    <property type="entry name" value="Enolase_N"/>
    <property type="match status" value="1"/>
</dbReference>
<dbReference type="SUPFAM" id="SSF51604">
    <property type="entry name" value="Enolase C-terminal domain-like"/>
    <property type="match status" value="1"/>
</dbReference>
<dbReference type="SUPFAM" id="SSF54826">
    <property type="entry name" value="Enolase N-terminal domain-like"/>
    <property type="match status" value="1"/>
</dbReference>
<dbReference type="PROSITE" id="PS00164">
    <property type="entry name" value="ENOLASE"/>
    <property type="match status" value="1"/>
</dbReference>
<reference key="1">
    <citation type="submission" date="2008-08" db="EMBL/GenBank/DDBJ databases">
        <title>Complete sequence of Acidithiobacillus ferrooxidans ATCC 53993.</title>
        <authorList>
            <person name="Lucas S."/>
            <person name="Copeland A."/>
            <person name="Lapidus A."/>
            <person name="Glavina del Rio T."/>
            <person name="Dalin E."/>
            <person name="Tice H."/>
            <person name="Bruce D."/>
            <person name="Goodwin L."/>
            <person name="Pitluck S."/>
            <person name="Sims D."/>
            <person name="Brettin T."/>
            <person name="Detter J.C."/>
            <person name="Han C."/>
            <person name="Kuske C.R."/>
            <person name="Larimer F."/>
            <person name="Land M."/>
            <person name="Hauser L."/>
            <person name="Kyrpides N."/>
            <person name="Lykidis A."/>
            <person name="Borole A.P."/>
        </authorList>
    </citation>
    <scope>NUCLEOTIDE SEQUENCE [LARGE SCALE GENOMIC DNA]</scope>
    <source>
        <strain>ATCC 53993 / BNL-5-31</strain>
    </source>
</reference>
<name>ENO_ACIF5</name>
<keyword id="KW-0963">Cytoplasm</keyword>
<keyword id="KW-0324">Glycolysis</keyword>
<keyword id="KW-0456">Lyase</keyword>
<keyword id="KW-0460">Magnesium</keyword>
<keyword id="KW-0479">Metal-binding</keyword>
<keyword id="KW-0964">Secreted</keyword>
<protein>
    <recommendedName>
        <fullName evidence="1">Enolase</fullName>
        <ecNumber evidence="1">4.2.1.11</ecNumber>
    </recommendedName>
    <alternativeName>
        <fullName evidence="1">2-phospho-D-glycerate hydro-lyase</fullName>
    </alternativeName>
    <alternativeName>
        <fullName evidence="1">2-phosphoglycerate dehydratase</fullName>
    </alternativeName>
</protein>
<gene>
    <name evidence="1" type="primary">eno</name>
    <name type="ordered locus">Lferr_0975</name>
</gene>
<sequence>MSAIVRIQAREVLDSRGNPTVEAEVYLDNGGMGRAIVPSGASTGEREAVELRDGGQRYGGKGVRKAVEHVNGEIQDALLGMEAEEQEHIDAALCALDGTENKARLGANAILSVSLATAHAAAHAAGQPLYRYIGGLGPLQLPVPMMNVINGGAHADNDVDMQEFMLIPAGAESFSEALQMGVEVFHSLKAVLQSRGLATTVGDEGGFAPNLPSNEAALELLMDAINKAGYQPGKDIWLGMDVASSEFYRDGRYHLASERRELDSAQFVDYLAALADRYPLISIEDGMDQNDWEGWITLTDRLGDRLQLVGDDIFVTNTTILREGIERGVANSILIKLNQIGTLSETLAAIEMAKVHSYTAIVSHRSGETEDTTLADVAVATGCGQIKTGSLSRTDRVAKYNRLLRIEEDLGDAARYPGLATFYNLD</sequence>
<feature type="chain" id="PRO_1000115820" description="Enolase">
    <location>
        <begin position="1"/>
        <end position="426"/>
    </location>
</feature>
<feature type="active site" description="Proton donor" evidence="1">
    <location>
        <position position="204"/>
    </location>
</feature>
<feature type="active site" description="Proton acceptor" evidence="1">
    <location>
        <position position="336"/>
    </location>
</feature>
<feature type="binding site" evidence="1">
    <location>
        <position position="162"/>
    </location>
    <ligand>
        <name>(2R)-2-phosphoglycerate</name>
        <dbReference type="ChEBI" id="CHEBI:58289"/>
    </ligand>
</feature>
<feature type="binding site" evidence="1">
    <location>
        <position position="241"/>
    </location>
    <ligand>
        <name>Mg(2+)</name>
        <dbReference type="ChEBI" id="CHEBI:18420"/>
    </ligand>
</feature>
<feature type="binding site" evidence="1">
    <location>
        <position position="284"/>
    </location>
    <ligand>
        <name>Mg(2+)</name>
        <dbReference type="ChEBI" id="CHEBI:18420"/>
    </ligand>
</feature>
<feature type="binding site" evidence="1">
    <location>
        <position position="311"/>
    </location>
    <ligand>
        <name>Mg(2+)</name>
        <dbReference type="ChEBI" id="CHEBI:18420"/>
    </ligand>
</feature>
<feature type="binding site" evidence="1">
    <location>
        <position position="336"/>
    </location>
    <ligand>
        <name>(2R)-2-phosphoglycerate</name>
        <dbReference type="ChEBI" id="CHEBI:58289"/>
    </ligand>
</feature>
<feature type="binding site" evidence="1">
    <location>
        <position position="365"/>
    </location>
    <ligand>
        <name>(2R)-2-phosphoglycerate</name>
        <dbReference type="ChEBI" id="CHEBI:58289"/>
    </ligand>
</feature>
<feature type="binding site" evidence="1">
    <location>
        <position position="366"/>
    </location>
    <ligand>
        <name>(2R)-2-phosphoglycerate</name>
        <dbReference type="ChEBI" id="CHEBI:58289"/>
    </ligand>
</feature>
<feature type="binding site" evidence="1">
    <location>
        <position position="387"/>
    </location>
    <ligand>
        <name>(2R)-2-phosphoglycerate</name>
        <dbReference type="ChEBI" id="CHEBI:58289"/>
    </ligand>
</feature>
<comment type="function">
    <text evidence="1">Catalyzes the reversible conversion of 2-phosphoglycerate (2-PG) into phosphoenolpyruvate (PEP). It is essential for the degradation of carbohydrates via glycolysis.</text>
</comment>
<comment type="catalytic activity">
    <reaction evidence="1">
        <text>(2R)-2-phosphoglycerate = phosphoenolpyruvate + H2O</text>
        <dbReference type="Rhea" id="RHEA:10164"/>
        <dbReference type="ChEBI" id="CHEBI:15377"/>
        <dbReference type="ChEBI" id="CHEBI:58289"/>
        <dbReference type="ChEBI" id="CHEBI:58702"/>
        <dbReference type="EC" id="4.2.1.11"/>
    </reaction>
</comment>
<comment type="cofactor">
    <cofactor evidence="1">
        <name>Mg(2+)</name>
        <dbReference type="ChEBI" id="CHEBI:18420"/>
    </cofactor>
    <text evidence="1">Binds a second Mg(2+) ion via substrate during catalysis.</text>
</comment>
<comment type="pathway">
    <text evidence="1">Carbohydrate degradation; glycolysis; pyruvate from D-glyceraldehyde 3-phosphate: step 4/5.</text>
</comment>
<comment type="subcellular location">
    <subcellularLocation>
        <location evidence="1">Cytoplasm</location>
    </subcellularLocation>
    <subcellularLocation>
        <location evidence="1">Secreted</location>
    </subcellularLocation>
    <subcellularLocation>
        <location evidence="1">Cell surface</location>
    </subcellularLocation>
    <text evidence="1">Fractions of enolase are present in both the cytoplasm and on the cell surface.</text>
</comment>
<comment type="similarity">
    <text evidence="1">Belongs to the enolase family.</text>
</comment>